<gene>
    <name evidence="1" type="primary">addB</name>
    <name type="ordered locus">BCB4264_A1192</name>
</gene>
<comment type="function">
    <text evidence="1">The heterodimer acts as both an ATP-dependent DNA helicase and an ATP-dependent, dual-direction single-stranded exonuclease. Recognizes the chi site generating a DNA molecule suitable for the initiation of homologous recombination. The AddB subunit has 5' -&gt; 3' nuclease activity but not helicase activity.</text>
</comment>
<comment type="cofactor">
    <cofactor evidence="1">
        <name>Mg(2+)</name>
        <dbReference type="ChEBI" id="CHEBI:18420"/>
    </cofactor>
</comment>
<comment type="cofactor">
    <cofactor evidence="1">
        <name>[4Fe-4S] cluster</name>
        <dbReference type="ChEBI" id="CHEBI:49883"/>
    </cofactor>
    <text evidence="1">Binds 1 [4Fe-4S] cluster.</text>
</comment>
<comment type="subunit">
    <text evidence="1">Heterodimer of AddA and AddB.</text>
</comment>
<comment type="miscellaneous">
    <text evidence="1">Despite having conserved helicase domains, this subunit does not have helicase activity.</text>
</comment>
<comment type="similarity">
    <text evidence="1">Belongs to the helicase family. AddB/RexB type 1 subfamily.</text>
</comment>
<protein>
    <recommendedName>
        <fullName evidence="1">ATP-dependent helicase/deoxyribonuclease subunit B</fullName>
        <ecNumber evidence="1">3.1.-.-</ecNumber>
    </recommendedName>
    <alternativeName>
        <fullName evidence="1">ATP-dependent helicase/nuclease subunit AddB</fullName>
    </alternativeName>
</protein>
<keyword id="KW-0004">4Fe-4S</keyword>
<keyword id="KW-0067">ATP-binding</keyword>
<keyword id="KW-0227">DNA damage</keyword>
<keyword id="KW-0234">DNA repair</keyword>
<keyword id="KW-0238">DNA-binding</keyword>
<keyword id="KW-0269">Exonuclease</keyword>
<keyword id="KW-0347">Helicase</keyword>
<keyword id="KW-0378">Hydrolase</keyword>
<keyword id="KW-0408">Iron</keyword>
<keyword id="KW-0411">Iron-sulfur</keyword>
<keyword id="KW-0479">Metal-binding</keyword>
<keyword id="KW-0540">Nuclease</keyword>
<keyword id="KW-0547">Nucleotide-binding</keyword>
<accession>B7HGP8</accession>
<proteinExistence type="inferred from homology"/>
<dbReference type="EC" id="3.1.-.-" evidence="1"/>
<dbReference type="EMBL" id="CP001176">
    <property type="protein sequence ID" value="ACK60886.1"/>
    <property type="molecule type" value="Genomic_DNA"/>
</dbReference>
<dbReference type="RefSeq" id="WP_000058594.1">
    <property type="nucleotide sequence ID" value="NC_011725.1"/>
</dbReference>
<dbReference type="SMR" id="B7HGP8"/>
<dbReference type="KEGG" id="bcb:BCB4264_A1192"/>
<dbReference type="HOGENOM" id="CLU_007838_0_0_9"/>
<dbReference type="Proteomes" id="UP000007096">
    <property type="component" value="Chromosome"/>
</dbReference>
<dbReference type="GO" id="GO:0051539">
    <property type="term" value="F:4 iron, 4 sulfur cluster binding"/>
    <property type="evidence" value="ECO:0007669"/>
    <property type="project" value="UniProtKB-KW"/>
</dbReference>
<dbReference type="GO" id="GO:0008409">
    <property type="term" value="F:5'-3' exonuclease activity"/>
    <property type="evidence" value="ECO:0007669"/>
    <property type="project" value="UniProtKB-UniRule"/>
</dbReference>
<dbReference type="GO" id="GO:0005524">
    <property type="term" value="F:ATP binding"/>
    <property type="evidence" value="ECO:0007669"/>
    <property type="project" value="UniProtKB-UniRule"/>
</dbReference>
<dbReference type="GO" id="GO:0003690">
    <property type="term" value="F:double-stranded DNA binding"/>
    <property type="evidence" value="ECO:0007669"/>
    <property type="project" value="UniProtKB-UniRule"/>
</dbReference>
<dbReference type="GO" id="GO:0004386">
    <property type="term" value="F:helicase activity"/>
    <property type="evidence" value="ECO:0007669"/>
    <property type="project" value="UniProtKB-KW"/>
</dbReference>
<dbReference type="GO" id="GO:0046872">
    <property type="term" value="F:metal ion binding"/>
    <property type="evidence" value="ECO:0007669"/>
    <property type="project" value="UniProtKB-KW"/>
</dbReference>
<dbReference type="GO" id="GO:0000724">
    <property type="term" value="P:double-strand break repair via homologous recombination"/>
    <property type="evidence" value="ECO:0007669"/>
    <property type="project" value="UniProtKB-UniRule"/>
</dbReference>
<dbReference type="FunFam" id="3.40.50.300:FF:001679">
    <property type="entry name" value="ATP-dependent helicase/deoxyribonuclease subunit B"/>
    <property type="match status" value="1"/>
</dbReference>
<dbReference type="FunFam" id="3.40.50.300:FF:001705">
    <property type="entry name" value="ATP-dependent helicase/deoxyribonuclease subunit B"/>
    <property type="match status" value="1"/>
</dbReference>
<dbReference type="FunFam" id="3.40.50.300:FF:001739">
    <property type="entry name" value="ATP-dependent helicase/deoxyribonuclease subunit B"/>
    <property type="match status" value="1"/>
</dbReference>
<dbReference type="FunFam" id="3.90.320.10:FF:000006">
    <property type="entry name" value="ATP-dependent helicase/deoxyribonuclease subunit B"/>
    <property type="match status" value="1"/>
</dbReference>
<dbReference type="Gene3D" id="3.90.320.10">
    <property type="match status" value="1"/>
</dbReference>
<dbReference type="Gene3D" id="6.10.140.1030">
    <property type="match status" value="1"/>
</dbReference>
<dbReference type="Gene3D" id="3.40.50.300">
    <property type="entry name" value="P-loop containing nucleotide triphosphate hydrolases"/>
    <property type="match status" value="4"/>
</dbReference>
<dbReference type="HAMAP" id="MF_01452">
    <property type="entry name" value="AddB_type1"/>
    <property type="match status" value="1"/>
</dbReference>
<dbReference type="InterPro" id="IPR049035">
    <property type="entry name" value="ADDB_N"/>
</dbReference>
<dbReference type="InterPro" id="IPR014140">
    <property type="entry name" value="DNA_helicase_suAddB"/>
</dbReference>
<dbReference type="InterPro" id="IPR014017">
    <property type="entry name" value="DNA_helicase_UvrD-like_C"/>
</dbReference>
<dbReference type="InterPro" id="IPR027417">
    <property type="entry name" value="P-loop_NTPase"/>
</dbReference>
<dbReference type="InterPro" id="IPR011604">
    <property type="entry name" value="PDDEXK-like_dom_sf"/>
</dbReference>
<dbReference type="InterPro" id="IPR038726">
    <property type="entry name" value="PDDEXK_AddAB-type"/>
</dbReference>
<dbReference type="NCBIfam" id="TIGR02773">
    <property type="entry name" value="addB_Gpos"/>
    <property type="match status" value="1"/>
</dbReference>
<dbReference type="PANTHER" id="PTHR30591">
    <property type="entry name" value="RECBCD ENZYME SUBUNIT RECC"/>
    <property type="match status" value="1"/>
</dbReference>
<dbReference type="PANTHER" id="PTHR30591:SF1">
    <property type="entry name" value="RECBCD ENZYME SUBUNIT RECC"/>
    <property type="match status" value="1"/>
</dbReference>
<dbReference type="Pfam" id="PF21445">
    <property type="entry name" value="ADDB_N"/>
    <property type="match status" value="1"/>
</dbReference>
<dbReference type="Pfam" id="PF12705">
    <property type="entry name" value="PDDEXK_1"/>
    <property type="match status" value="1"/>
</dbReference>
<dbReference type="Pfam" id="PF13361">
    <property type="entry name" value="UvrD_C"/>
    <property type="match status" value="1"/>
</dbReference>
<dbReference type="SUPFAM" id="SSF52540">
    <property type="entry name" value="P-loop containing nucleoside triphosphate hydrolases"/>
    <property type="match status" value="1"/>
</dbReference>
<dbReference type="PROSITE" id="PS51198">
    <property type="entry name" value="UVRD_HELICASE_ATP_BIND"/>
    <property type="match status" value="1"/>
</dbReference>
<dbReference type="PROSITE" id="PS51217">
    <property type="entry name" value="UVRD_HELICASE_CTER"/>
    <property type="match status" value="1"/>
</dbReference>
<evidence type="ECO:0000255" key="1">
    <source>
        <dbReference type="HAMAP-Rule" id="MF_01452"/>
    </source>
</evidence>
<reference key="1">
    <citation type="submission" date="2008-10" db="EMBL/GenBank/DDBJ databases">
        <title>Genome sequence of Bacillus cereus B4264.</title>
        <authorList>
            <person name="Dodson R.J."/>
            <person name="Durkin A.S."/>
            <person name="Rosovitz M.J."/>
            <person name="Rasko D.A."/>
            <person name="Hoffmaster A."/>
            <person name="Ravel J."/>
            <person name="Sutton G."/>
        </authorList>
    </citation>
    <scope>NUCLEOTIDE SEQUENCE [LARGE SCALE GENOMIC DNA]</scope>
    <source>
        <strain>B4264</strain>
    </source>
</reference>
<feature type="chain" id="PRO_0000379157" description="ATP-dependent helicase/deoxyribonuclease subunit B">
    <location>
        <begin position="1"/>
        <end position="1171"/>
    </location>
</feature>
<feature type="domain" description="UvrD-like helicase ATP-binding" evidence="1">
    <location>
        <begin position="1"/>
        <end position="390"/>
    </location>
</feature>
<feature type="domain" description="UvrD-like helicase C-terminal" evidence="1">
    <location>
        <begin position="281"/>
        <end position="587"/>
    </location>
</feature>
<feature type="binding site" evidence="1">
    <location>
        <begin position="8"/>
        <end position="15"/>
    </location>
    <ligand>
        <name>ATP</name>
        <dbReference type="ChEBI" id="CHEBI:30616"/>
    </ligand>
</feature>
<feature type="binding site" evidence="1">
    <location>
        <position position="805"/>
    </location>
    <ligand>
        <name>[4Fe-4S] cluster</name>
        <dbReference type="ChEBI" id="CHEBI:49883"/>
    </ligand>
</feature>
<feature type="binding site" evidence="1">
    <location>
        <position position="1129"/>
    </location>
    <ligand>
        <name>[4Fe-4S] cluster</name>
        <dbReference type="ChEBI" id="CHEBI:49883"/>
    </ligand>
</feature>
<feature type="binding site" evidence="1">
    <location>
        <position position="1132"/>
    </location>
    <ligand>
        <name>[4Fe-4S] cluster</name>
        <dbReference type="ChEBI" id="CHEBI:49883"/>
    </ligand>
</feature>
<feature type="binding site" evidence="1">
    <location>
        <position position="1138"/>
    </location>
    <ligand>
        <name>[4Fe-4S] cluster</name>
        <dbReference type="ChEBI" id="CHEBI:49883"/>
    </ligand>
</feature>
<sequence>MSLRFVIGRAGSGKSTLCLREVQEELKQRPRGKTILYLVPEQMTFQTQQALIGSEDVRGSIRAQVFSFSRLAWKVLQEVGGASRLHIDEAGVHMLLRKIVESRKDGLSVFQKAAEQNGFFEHLGSMIAEFKRYNVTPSNVYEMWQQLDAHSSSAEQKLLANKVYDLQLLYDDFERALIGKYLDSEDYLQLLVEKLPQSEYVNGAEIYIDGFHSFSPQELEIVRQLMICGARVTITLTIDEKTLAQPVNELDLFYETTLTYEKIKQVAREEKIEIEKTIPLMEQPRFHSPALAHLEAHYEARPNEKFNGEASVTISTAANLRAEVEGVAREIRKLVADEKYRYRDIAVLLRNGESYYDVMRTLFTDYNIPHFIDEKRPMSHHPLVECIRSALEIISGNWRYDAVFRCVKTELLYPLDVRKETMREEMDEFENYCLAYGVQGKRWTSEDPWMYRRYRSLDDTNGMITDSEREMEEKINRLRDVVRTPVIRMQKRLKRAGTVMQMCEAVYLFLEELDVPKKLEELRIRAEESGDFLFATDHEQVWEEVMSLLDTFVEMLGEEKMSLSMFTDVMSTGLEALQFANIPPSLDQVLIANIDHSRLSDVKATFIIGVNEGVIPAAPMDEGMLSDEEREVLGAAGIELAPTTRQTLLEEQFVMYQMVTRASEKLYISCPLADEEGKTLLASSFIKKIKRMFPNVKDSFITNDVNDLSRSEQISYVATPEVTLSYVMQQLQTWKRYGFEGNLDFWWDVYNFYVTSDEWKQKSSRVLSSLFYRNRAKKLSTAVSRDLYGDIIKGSVSRMELFNRCAYAHFAQHGLSLRERDIFKLDAPDIGELFHAALKKIADKLLRENRTWADLSIKECEHLSVLVIEEIAPLLQRQILLSSNRHFYLKQKLQQIIFRTSIILREHAKSSGFVPVDLEVPFGMGGTGSLPPMEFSLPNGVKMEVVGRIDRVDKAEDENGTFLRIIDYKSSSKVLDLTEVYYGLALQMLTYLDVVTSNAQTWMKKGHAASPAGVLYFHIHNPIVEMKGDASEAEIEKEILKKFKMKGLVLGDADVVRLMDNKLSTGSSDIISAGLKKDGSFSARSSIASEQEFNVLQKYVHHTFENIGKDITEGVIDIAPYKMGNKAACTFCNFKSVCQFDESLEDNQFRSLKDMKDSEAMEKIREEVGGE</sequence>
<name>ADDB_BACC4</name>
<organism>
    <name type="scientific">Bacillus cereus (strain B4264)</name>
    <dbReference type="NCBI Taxonomy" id="405532"/>
    <lineage>
        <taxon>Bacteria</taxon>
        <taxon>Bacillati</taxon>
        <taxon>Bacillota</taxon>
        <taxon>Bacilli</taxon>
        <taxon>Bacillales</taxon>
        <taxon>Bacillaceae</taxon>
        <taxon>Bacillus</taxon>
        <taxon>Bacillus cereus group</taxon>
    </lineage>
</organism>